<feature type="chain" id="PRO_0000156703" description="Melanoma-associated antigen 3">
    <location>
        <begin position="1"/>
        <end position="314"/>
    </location>
</feature>
<feature type="domain" description="MAGE" evidence="1">
    <location>
        <begin position="109"/>
        <end position="308"/>
    </location>
</feature>
<feature type="region of interest" description="Disordered" evidence="2">
    <location>
        <begin position="1"/>
        <end position="99"/>
    </location>
</feature>
<feature type="compositionally biased region" description="Basic and acidic residues" evidence="2">
    <location>
        <begin position="1"/>
        <end position="20"/>
    </location>
</feature>
<feature type="compositionally biased region" description="Low complexity" evidence="2">
    <location>
        <begin position="21"/>
        <end position="44"/>
    </location>
</feature>
<feature type="compositionally biased region" description="Polar residues" evidence="2">
    <location>
        <begin position="65"/>
        <end position="87"/>
    </location>
</feature>
<feature type="mutagenesis site" description="Abolishes HLA-A1 binding." evidence="7">
    <original>D</original>
    <variation>A</variation>
    <location>
        <position position="170"/>
    </location>
</feature>
<feature type="mutagenesis site" description="Abolishes HLA-A1 binding." evidence="7">
    <original>Y</original>
    <variation>A</variation>
    <location>
        <position position="176"/>
    </location>
</feature>
<feature type="mutagenesis site" description="Abolished recognition by the DCX(DCAF12) complex and ubiquitination." evidence="6">
    <original>E</original>
    <variation>EDNYNEPKANQ</variation>
    <location>
        <position position="314"/>
    </location>
</feature>
<feature type="helix" evidence="13">
    <location>
        <begin position="104"/>
        <end position="126"/>
    </location>
</feature>
<feature type="helix" evidence="13">
    <location>
        <begin position="132"/>
        <end position="138"/>
    </location>
</feature>
<feature type="helix" evidence="13">
    <location>
        <begin position="141"/>
        <end position="146"/>
    </location>
</feature>
<feature type="helix" evidence="13">
    <location>
        <begin position="147"/>
        <end position="162"/>
    </location>
</feature>
<feature type="strand" evidence="13">
    <location>
        <begin position="164"/>
        <end position="170"/>
    </location>
</feature>
<feature type="turn" evidence="13">
    <location>
        <begin position="171"/>
        <end position="174"/>
    </location>
</feature>
<feature type="strand" evidence="13">
    <location>
        <begin position="175"/>
        <end position="180"/>
    </location>
</feature>
<feature type="helix" evidence="13">
    <location>
        <begin position="181"/>
        <end position="183"/>
    </location>
</feature>
<feature type="helix" evidence="13">
    <location>
        <begin position="199"/>
        <end position="212"/>
    </location>
</feature>
<feature type="helix" evidence="13">
    <location>
        <begin position="218"/>
        <end position="225"/>
    </location>
</feature>
<feature type="helix" evidence="13">
    <location>
        <begin position="229"/>
        <end position="231"/>
    </location>
</feature>
<feature type="helix" evidence="13">
    <location>
        <begin position="242"/>
        <end position="252"/>
    </location>
</feature>
<feature type="strand" evidence="13">
    <location>
        <begin position="255"/>
        <end position="260"/>
    </location>
</feature>
<feature type="strand" evidence="13">
    <location>
        <begin position="269"/>
        <end position="273"/>
    </location>
</feature>
<feature type="helix" evidence="13">
    <location>
        <begin position="275"/>
        <end position="280"/>
    </location>
</feature>
<feature type="helix" evidence="13">
    <location>
        <begin position="283"/>
        <end position="292"/>
    </location>
</feature>
<feature type="turn" evidence="13">
    <location>
        <begin position="293"/>
        <end position="295"/>
    </location>
</feature>
<feature type="helix" evidence="13">
    <location>
        <begin position="304"/>
        <end position="306"/>
    </location>
</feature>
<reference key="1">
    <citation type="journal article" date="1994" name="J. Exp. Med.">
        <title>Human gene MAGE-3 codes for an antigen recognized on a melanoma by autologous cytolytic T lymphocytes.</title>
        <authorList>
            <person name="Gaugler B."/>
            <person name="van den Eynde B."/>
            <person name="van der Bruggen P."/>
            <person name="Romero P."/>
            <person name="Gaforio J.J."/>
            <person name="De Plaen E."/>
            <person name="Lethe B.G."/>
            <person name="Brasseur F."/>
            <person name="Boon T."/>
        </authorList>
    </citation>
    <scope>NUCLEOTIDE SEQUENCE [GENOMIC DNA]</scope>
    <scope>FUNCTION</scope>
    <scope>TISSUE SPECIFICITY</scope>
    <scope>MUTAGENESIS OF ASP-170 AND TYR-176</scope>
    <source>
        <tissue>Blood</tissue>
    </source>
</reference>
<reference key="2">
    <citation type="journal article" date="1994" name="Biochem. Biophys. Res. Commun.">
        <title>Cloning and analysis of MAGE-1-related genes.</title>
        <authorList>
            <person name="Ding M."/>
            <person name="Beck R.J."/>
            <person name="Keller C.J."/>
            <person name="Fenton R.G."/>
        </authorList>
    </citation>
    <scope>NUCLEOTIDE SEQUENCE [MRNA]</scope>
    <source>
        <tissue>Skin</tissue>
    </source>
</reference>
<reference key="3">
    <citation type="submission" date="2004-06" db="EMBL/GenBank/DDBJ databases">
        <title>Cloning of human full open reading frames in Gateway(TM) system entry vector (pDONR201).</title>
        <authorList>
            <person name="Ebert L."/>
            <person name="Schick M."/>
            <person name="Neubert P."/>
            <person name="Schatten R."/>
            <person name="Henze S."/>
            <person name="Korn B."/>
        </authorList>
    </citation>
    <scope>NUCLEOTIDE SEQUENCE [LARGE SCALE MRNA]</scope>
</reference>
<reference key="4">
    <citation type="journal article" date="2004" name="Nat. Genet.">
        <title>Complete sequencing and characterization of 21,243 full-length human cDNAs.</title>
        <authorList>
            <person name="Ota T."/>
            <person name="Suzuki Y."/>
            <person name="Nishikawa T."/>
            <person name="Otsuki T."/>
            <person name="Sugiyama T."/>
            <person name="Irie R."/>
            <person name="Wakamatsu A."/>
            <person name="Hayashi K."/>
            <person name="Sato H."/>
            <person name="Nagai K."/>
            <person name="Kimura K."/>
            <person name="Makita H."/>
            <person name="Sekine M."/>
            <person name="Obayashi M."/>
            <person name="Nishi T."/>
            <person name="Shibahara T."/>
            <person name="Tanaka T."/>
            <person name="Ishii S."/>
            <person name="Yamamoto J."/>
            <person name="Saito K."/>
            <person name="Kawai Y."/>
            <person name="Isono Y."/>
            <person name="Nakamura Y."/>
            <person name="Nagahari K."/>
            <person name="Murakami K."/>
            <person name="Yasuda T."/>
            <person name="Iwayanagi T."/>
            <person name="Wagatsuma M."/>
            <person name="Shiratori A."/>
            <person name="Sudo H."/>
            <person name="Hosoiri T."/>
            <person name="Kaku Y."/>
            <person name="Kodaira H."/>
            <person name="Kondo H."/>
            <person name="Sugawara M."/>
            <person name="Takahashi M."/>
            <person name="Kanda K."/>
            <person name="Yokoi T."/>
            <person name="Furuya T."/>
            <person name="Kikkawa E."/>
            <person name="Omura Y."/>
            <person name="Abe K."/>
            <person name="Kamihara K."/>
            <person name="Katsuta N."/>
            <person name="Sato K."/>
            <person name="Tanikawa M."/>
            <person name="Yamazaki M."/>
            <person name="Ninomiya K."/>
            <person name="Ishibashi T."/>
            <person name="Yamashita H."/>
            <person name="Murakawa K."/>
            <person name="Fujimori K."/>
            <person name="Tanai H."/>
            <person name="Kimata M."/>
            <person name="Watanabe M."/>
            <person name="Hiraoka S."/>
            <person name="Chiba Y."/>
            <person name="Ishida S."/>
            <person name="Ono Y."/>
            <person name="Takiguchi S."/>
            <person name="Watanabe S."/>
            <person name="Yosida M."/>
            <person name="Hotuta T."/>
            <person name="Kusano J."/>
            <person name="Kanehori K."/>
            <person name="Takahashi-Fujii A."/>
            <person name="Hara H."/>
            <person name="Tanase T.-O."/>
            <person name="Nomura Y."/>
            <person name="Togiya S."/>
            <person name="Komai F."/>
            <person name="Hara R."/>
            <person name="Takeuchi K."/>
            <person name="Arita M."/>
            <person name="Imose N."/>
            <person name="Musashino K."/>
            <person name="Yuuki H."/>
            <person name="Oshima A."/>
            <person name="Sasaki N."/>
            <person name="Aotsuka S."/>
            <person name="Yoshikawa Y."/>
            <person name="Matsunawa H."/>
            <person name="Ichihara T."/>
            <person name="Shiohata N."/>
            <person name="Sano S."/>
            <person name="Moriya S."/>
            <person name="Momiyama H."/>
            <person name="Satoh N."/>
            <person name="Takami S."/>
            <person name="Terashima Y."/>
            <person name="Suzuki O."/>
            <person name="Nakagawa S."/>
            <person name="Senoh A."/>
            <person name="Mizoguchi H."/>
            <person name="Goto Y."/>
            <person name="Shimizu F."/>
            <person name="Wakebe H."/>
            <person name="Hishigaki H."/>
            <person name="Watanabe T."/>
            <person name="Sugiyama A."/>
            <person name="Takemoto M."/>
            <person name="Kawakami B."/>
            <person name="Yamazaki M."/>
            <person name="Watanabe K."/>
            <person name="Kumagai A."/>
            <person name="Itakura S."/>
            <person name="Fukuzumi Y."/>
            <person name="Fujimori Y."/>
            <person name="Komiyama M."/>
            <person name="Tashiro H."/>
            <person name="Tanigami A."/>
            <person name="Fujiwara T."/>
            <person name="Ono T."/>
            <person name="Yamada K."/>
            <person name="Fujii Y."/>
            <person name="Ozaki K."/>
            <person name="Hirao M."/>
            <person name="Ohmori Y."/>
            <person name="Kawabata A."/>
            <person name="Hikiji T."/>
            <person name="Kobatake N."/>
            <person name="Inagaki H."/>
            <person name="Ikema Y."/>
            <person name="Okamoto S."/>
            <person name="Okitani R."/>
            <person name="Kawakami T."/>
            <person name="Noguchi S."/>
            <person name="Itoh T."/>
            <person name="Shigeta K."/>
            <person name="Senba T."/>
            <person name="Matsumura K."/>
            <person name="Nakajima Y."/>
            <person name="Mizuno T."/>
            <person name="Morinaga M."/>
            <person name="Sasaki M."/>
            <person name="Togashi T."/>
            <person name="Oyama M."/>
            <person name="Hata H."/>
            <person name="Watanabe M."/>
            <person name="Komatsu T."/>
            <person name="Mizushima-Sugano J."/>
            <person name="Satoh T."/>
            <person name="Shirai Y."/>
            <person name="Takahashi Y."/>
            <person name="Nakagawa K."/>
            <person name="Okumura K."/>
            <person name="Nagase T."/>
            <person name="Nomura N."/>
            <person name="Kikuchi H."/>
            <person name="Masuho Y."/>
            <person name="Yamashita R."/>
            <person name="Nakai K."/>
            <person name="Yada T."/>
            <person name="Nakamura Y."/>
            <person name="Ohara O."/>
            <person name="Isogai T."/>
            <person name="Sugano S."/>
        </authorList>
    </citation>
    <scope>NUCLEOTIDE SEQUENCE [LARGE SCALE MRNA]</scope>
    <source>
        <tissue>Testis</tissue>
    </source>
</reference>
<reference key="5">
    <citation type="journal article" date="2000" name="Genome Res.">
        <title>Comparative genome sequence analysis of the Bpa/Str region in mouse and man.</title>
        <authorList>
            <person name="Mallon A.-M."/>
            <person name="Platzer M."/>
            <person name="Bate R."/>
            <person name="Gloeckner G."/>
            <person name="Botcherby M.R.M."/>
            <person name="Nordsiek G."/>
            <person name="Strivens M.A."/>
            <person name="Kioschis P."/>
            <person name="Dangel A."/>
            <person name="Cunningham D."/>
            <person name="Straw R.N.A."/>
            <person name="Weston P."/>
            <person name="Gilbert M."/>
            <person name="Fernando S."/>
            <person name="Goodall K."/>
            <person name="Hunter G."/>
            <person name="Greystrong J.S."/>
            <person name="Clarke D."/>
            <person name="Kimberley C."/>
            <person name="Goerdes M."/>
            <person name="Blechschmidt K."/>
            <person name="Rump A."/>
            <person name="Hinzmann B."/>
            <person name="Mundy C.R."/>
            <person name="Miller W."/>
            <person name="Poustka A."/>
            <person name="Herman G.E."/>
            <person name="Rhodes M."/>
            <person name="Denny P."/>
            <person name="Rosenthal A."/>
            <person name="Brown S.D.M."/>
        </authorList>
    </citation>
    <scope>NUCLEOTIDE SEQUENCE [LARGE SCALE GENOMIC DNA]</scope>
</reference>
<reference key="6">
    <citation type="journal article" date="2005" name="Nature">
        <title>The DNA sequence of the human X chromosome.</title>
        <authorList>
            <person name="Ross M.T."/>
            <person name="Grafham D.V."/>
            <person name="Coffey A.J."/>
            <person name="Scherer S."/>
            <person name="McLay K."/>
            <person name="Muzny D."/>
            <person name="Platzer M."/>
            <person name="Howell G.R."/>
            <person name="Burrows C."/>
            <person name="Bird C.P."/>
            <person name="Frankish A."/>
            <person name="Lovell F.L."/>
            <person name="Howe K.L."/>
            <person name="Ashurst J.L."/>
            <person name="Fulton R.S."/>
            <person name="Sudbrak R."/>
            <person name="Wen G."/>
            <person name="Jones M.C."/>
            <person name="Hurles M.E."/>
            <person name="Andrews T.D."/>
            <person name="Scott C.E."/>
            <person name="Searle S."/>
            <person name="Ramser J."/>
            <person name="Whittaker A."/>
            <person name="Deadman R."/>
            <person name="Carter N.P."/>
            <person name="Hunt S.E."/>
            <person name="Chen R."/>
            <person name="Cree A."/>
            <person name="Gunaratne P."/>
            <person name="Havlak P."/>
            <person name="Hodgson A."/>
            <person name="Metzker M.L."/>
            <person name="Richards S."/>
            <person name="Scott G."/>
            <person name="Steffen D."/>
            <person name="Sodergren E."/>
            <person name="Wheeler D.A."/>
            <person name="Worley K.C."/>
            <person name="Ainscough R."/>
            <person name="Ambrose K.D."/>
            <person name="Ansari-Lari M.A."/>
            <person name="Aradhya S."/>
            <person name="Ashwell R.I."/>
            <person name="Babbage A.K."/>
            <person name="Bagguley C.L."/>
            <person name="Ballabio A."/>
            <person name="Banerjee R."/>
            <person name="Barker G.E."/>
            <person name="Barlow K.F."/>
            <person name="Barrett I.P."/>
            <person name="Bates K.N."/>
            <person name="Beare D.M."/>
            <person name="Beasley H."/>
            <person name="Beasley O."/>
            <person name="Beck A."/>
            <person name="Bethel G."/>
            <person name="Blechschmidt K."/>
            <person name="Brady N."/>
            <person name="Bray-Allen S."/>
            <person name="Bridgeman A.M."/>
            <person name="Brown A.J."/>
            <person name="Brown M.J."/>
            <person name="Bonnin D."/>
            <person name="Bruford E.A."/>
            <person name="Buhay C."/>
            <person name="Burch P."/>
            <person name="Burford D."/>
            <person name="Burgess J."/>
            <person name="Burrill W."/>
            <person name="Burton J."/>
            <person name="Bye J.M."/>
            <person name="Carder C."/>
            <person name="Carrel L."/>
            <person name="Chako J."/>
            <person name="Chapman J.C."/>
            <person name="Chavez D."/>
            <person name="Chen E."/>
            <person name="Chen G."/>
            <person name="Chen Y."/>
            <person name="Chen Z."/>
            <person name="Chinault C."/>
            <person name="Ciccodicola A."/>
            <person name="Clark S.Y."/>
            <person name="Clarke G."/>
            <person name="Clee C.M."/>
            <person name="Clegg S."/>
            <person name="Clerc-Blankenburg K."/>
            <person name="Clifford K."/>
            <person name="Cobley V."/>
            <person name="Cole C.G."/>
            <person name="Conquer J.S."/>
            <person name="Corby N."/>
            <person name="Connor R.E."/>
            <person name="David R."/>
            <person name="Davies J."/>
            <person name="Davis C."/>
            <person name="Davis J."/>
            <person name="Delgado O."/>
            <person name="Deshazo D."/>
            <person name="Dhami P."/>
            <person name="Ding Y."/>
            <person name="Dinh H."/>
            <person name="Dodsworth S."/>
            <person name="Draper H."/>
            <person name="Dugan-Rocha S."/>
            <person name="Dunham A."/>
            <person name="Dunn M."/>
            <person name="Durbin K.J."/>
            <person name="Dutta I."/>
            <person name="Eades T."/>
            <person name="Ellwood M."/>
            <person name="Emery-Cohen A."/>
            <person name="Errington H."/>
            <person name="Evans K.L."/>
            <person name="Faulkner L."/>
            <person name="Francis F."/>
            <person name="Frankland J."/>
            <person name="Fraser A.E."/>
            <person name="Galgoczy P."/>
            <person name="Gilbert J."/>
            <person name="Gill R."/>
            <person name="Gloeckner G."/>
            <person name="Gregory S.G."/>
            <person name="Gribble S."/>
            <person name="Griffiths C."/>
            <person name="Grocock R."/>
            <person name="Gu Y."/>
            <person name="Gwilliam R."/>
            <person name="Hamilton C."/>
            <person name="Hart E.A."/>
            <person name="Hawes A."/>
            <person name="Heath P.D."/>
            <person name="Heitmann K."/>
            <person name="Hennig S."/>
            <person name="Hernandez J."/>
            <person name="Hinzmann B."/>
            <person name="Ho S."/>
            <person name="Hoffs M."/>
            <person name="Howden P.J."/>
            <person name="Huckle E.J."/>
            <person name="Hume J."/>
            <person name="Hunt P.J."/>
            <person name="Hunt A.R."/>
            <person name="Isherwood J."/>
            <person name="Jacob L."/>
            <person name="Johnson D."/>
            <person name="Jones S."/>
            <person name="de Jong P.J."/>
            <person name="Joseph S.S."/>
            <person name="Keenan S."/>
            <person name="Kelly S."/>
            <person name="Kershaw J.K."/>
            <person name="Khan Z."/>
            <person name="Kioschis P."/>
            <person name="Klages S."/>
            <person name="Knights A.J."/>
            <person name="Kosiura A."/>
            <person name="Kovar-Smith C."/>
            <person name="Laird G.K."/>
            <person name="Langford C."/>
            <person name="Lawlor S."/>
            <person name="Leversha M."/>
            <person name="Lewis L."/>
            <person name="Liu W."/>
            <person name="Lloyd C."/>
            <person name="Lloyd D.M."/>
            <person name="Loulseged H."/>
            <person name="Loveland J.E."/>
            <person name="Lovell J.D."/>
            <person name="Lozado R."/>
            <person name="Lu J."/>
            <person name="Lyne R."/>
            <person name="Ma J."/>
            <person name="Maheshwari M."/>
            <person name="Matthews L.H."/>
            <person name="McDowall J."/>
            <person name="McLaren S."/>
            <person name="McMurray A."/>
            <person name="Meidl P."/>
            <person name="Meitinger T."/>
            <person name="Milne S."/>
            <person name="Miner G."/>
            <person name="Mistry S.L."/>
            <person name="Morgan M."/>
            <person name="Morris S."/>
            <person name="Mueller I."/>
            <person name="Mullikin J.C."/>
            <person name="Nguyen N."/>
            <person name="Nordsiek G."/>
            <person name="Nyakatura G."/>
            <person name="O'dell C.N."/>
            <person name="Okwuonu G."/>
            <person name="Palmer S."/>
            <person name="Pandian R."/>
            <person name="Parker D."/>
            <person name="Parrish J."/>
            <person name="Pasternak S."/>
            <person name="Patel D."/>
            <person name="Pearce A.V."/>
            <person name="Pearson D.M."/>
            <person name="Pelan S.E."/>
            <person name="Perez L."/>
            <person name="Porter K.M."/>
            <person name="Ramsey Y."/>
            <person name="Reichwald K."/>
            <person name="Rhodes S."/>
            <person name="Ridler K.A."/>
            <person name="Schlessinger D."/>
            <person name="Schueler M.G."/>
            <person name="Sehra H.K."/>
            <person name="Shaw-Smith C."/>
            <person name="Shen H."/>
            <person name="Sheridan E.M."/>
            <person name="Shownkeen R."/>
            <person name="Skuce C.D."/>
            <person name="Smith M.L."/>
            <person name="Sotheran E.C."/>
            <person name="Steingruber H.E."/>
            <person name="Steward C.A."/>
            <person name="Storey R."/>
            <person name="Swann R.M."/>
            <person name="Swarbreck D."/>
            <person name="Tabor P.E."/>
            <person name="Taudien S."/>
            <person name="Taylor T."/>
            <person name="Teague B."/>
            <person name="Thomas K."/>
            <person name="Thorpe A."/>
            <person name="Timms K."/>
            <person name="Tracey A."/>
            <person name="Trevanion S."/>
            <person name="Tromans A.C."/>
            <person name="d'Urso M."/>
            <person name="Verduzco D."/>
            <person name="Villasana D."/>
            <person name="Waldron L."/>
            <person name="Wall M."/>
            <person name="Wang Q."/>
            <person name="Warren J."/>
            <person name="Warry G.L."/>
            <person name="Wei X."/>
            <person name="West A."/>
            <person name="Whitehead S.L."/>
            <person name="Whiteley M.N."/>
            <person name="Wilkinson J.E."/>
            <person name="Willey D.L."/>
            <person name="Williams G."/>
            <person name="Williams L."/>
            <person name="Williamson A."/>
            <person name="Williamson H."/>
            <person name="Wilming L."/>
            <person name="Woodmansey R.L."/>
            <person name="Wray P.W."/>
            <person name="Yen J."/>
            <person name="Zhang J."/>
            <person name="Zhou J."/>
            <person name="Zoghbi H."/>
            <person name="Zorilla S."/>
            <person name="Buck D."/>
            <person name="Reinhardt R."/>
            <person name="Poustka A."/>
            <person name="Rosenthal A."/>
            <person name="Lehrach H."/>
            <person name="Meindl A."/>
            <person name="Minx P.J."/>
            <person name="Hillier L.W."/>
            <person name="Willard H.F."/>
            <person name="Wilson R.K."/>
            <person name="Waterston R.H."/>
            <person name="Rice C.M."/>
            <person name="Vaudin M."/>
            <person name="Coulson A."/>
            <person name="Nelson D.L."/>
            <person name="Weinstock G."/>
            <person name="Sulston J.E."/>
            <person name="Durbin R.M."/>
            <person name="Hubbard T."/>
            <person name="Gibbs R.A."/>
            <person name="Beck S."/>
            <person name="Rogers J."/>
            <person name="Bentley D.R."/>
        </authorList>
    </citation>
    <scope>NUCLEOTIDE SEQUENCE [LARGE SCALE GENOMIC DNA]</scope>
</reference>
<reference key="7">
    <citation type="journal article" date="2004" name="Genome Res.">
        <title>The status, quality, and expansion of the NIH full-length cDNA project: the Mammalian Gene Collection (MGC).</title>
        <authorList>
            <consortium name="The MGC Project Team"/>
        </authorList>
    </citation>
    <scope>NUCLEOTIDE SEQUENCE [LARGE SCALE MRNA]</scope>
    <source>
        <tissue>Bone marrow</tissue>
        <tissue>Lung</tissue>
        <tissue>Prostate</tissue>
        <tissue>Skin</tissue>
    </source>
</reference>
<reference key="8">
    <citation type="journal article" date="2007" name="Cancer Res.">
        <title>MAGE-A, mMage-b, and MAGE-C proteins form complexes with KAP1 and suppress p53-dependent apoptosis in MAGE-positive cell lines.</title>
        <authorList>
            <person name="Yang B."/>
            <person name="O'Herrin S.M."/>
            <person name="Wu J."/>
            <person name="Reagan-Shaw S."/>
            <person name="Ma Y."/>
            <person name="Bhat K.M."/>
            <person name="Gravekamp C."/>
            <person name="Setaluri V."/>
            <person name="Peters N."/>
            <person name="Hoffmann F.M."/>
            <person name="Peng H."/>
            <person name="Ivanov A.V."/>
            <person name="Simpson A.J."/>
            <person name="Longley B.J."/>
        </authorList>
    </citation>
    <scope>FUNCTION</scope>
    <scope>INTERACTION WITH TRIM28</scope>
</reference>
<reference key="9">
    <citation type="journal article" date="2010" name="Mol. Cell">
        <title>MAGE-RING protein complexes comprise a family of E3 ubiquitin ligases.</title>
        <authorList>
            <person name="Doyle J.M."/>
            <person name="Gao J."/>
            <person name="Wang J."/>
            <person name="Yang M."/>
            <person name="Potts P.R."/>
        </authorList>
    </citation>
    <scope>FUNCTION</scope>
    <scope>INTERACTION WITH TRIM28</scope>
</reference>
<reference key="10">
    <citation type="journal article" date="2018" name="Cell">
        <title>The eukaryotic proteome is shaped by E3 ubiquitin ligases targeting C-terminal degrons.</title>
        <authorList>
            <person name="Koren I."/>
            <person name="Timms R.T."/>
            <person name="Kula T."/>
            <person name="Xu Q."/>
            <person name="Li M.Z."/>
            <person name="Elledge S.J."/>
        </authorList>
    </citation>
    <scope>UBIQUITINATION</scope>
</reference>
<reference key="11">
    <citation type="journal article" date="2019" name="EMBO Rep.">
        <title>Regulation of MAGE-A3/6 by the CRL4-DCAF12 ubiquitin ligase and nutrient availability.</title>
        <authorList>
            <person name="Ravichandran R."/>
            <person name="Kodali K."/>
            <person name="Peng J."/>
            <person name="Potts P.R."/>
        </authorList>
    </citation>
    <scope>FUNCTION</scope>
    <scope>UBIQUITINATION</scope>
    <scope>MUTAGENESIS OF GLU-314</scope>
</reference>
<reference key="12">
    <citation type="submission" date="2009-02" db="PDB data bank">
        <title>Human class I histocompatibility antigen (HLA-A) complex with a nonameric peptide from melanoma-associated antigen 3 (residues 271-279).</title>
        <authorList>
            <person name="Orth P."/>
            <person name="Alings C."/>
            <person name="Saenger W."/>
            <person name="Ziegler A."/>
        </authorList>
    </citation>
    <scope>X-RAY CRYSTALLOGRAPHY (2.2 ANGSTROMS) OF 271-279 IN COMPLEX WITH HLA CLASS I HISTOCOMPATIBILITY COMPLEX</scope>
</reference>
<evidence type="ECO:0000255" key="1">
    <source>
        <dbReference type="PROSITE-ProRule" id="PRU00127"/>
    </source>
</evidence>
<evidence type="ECO:0000256" key="2">
    <source>
        <dbReference type="SAM" id="MobiDB-lite"/>
    </source>
</evidence>
<evidence type="ECO:0000269" key="3">
    <source>
    </source>
</evidence>
<evidence type="ECO:0000269" key="4">
    <source>
    </source>
</evidence>
<evidence type="ECO:0000269" key="5">
    <source>
    </source>
</evidence>
<evidence type="ECO:0000269" key="6">
    <source>
    </source>
</evidence>
<evidence type="ECO:0000269" key="7">
    <source>
    </source>
</evidence>
<evidence type="ECO:0000269" key="8">
    <source ref="12"/>
</evidence>
<evidence type="ECO:0000303" key="9">
    <source>
    </source>
</evidence>
<evidence type="ECO:0000303" key="10">
    <source>
    </source>
</evidence>
<evidence type="ECO:0000305" key="11"/>
<evidence type="ECO:0000312" key="12">
    <source>
        <dbReference type="HGNC" id="HGNC:6801"/>
    </source>
</evidence>
<evidence type="ECO:0007829" key="13">
    <source>
        <dbReference type="PDB" id="4V0P"/>
    </source>
</evidence>
<dbReference type="EMBL" id="U03735">
    <property type="protein sequence ID" value="AAA17446.1"/>
    <property type="molecule type" value="Genomic_DNA"/>
</dbReference>
<dbReference type="EMBL" id="U82671">
    <property type="status" value="NOT_ANNOTATED_CDS"/>
    <property type="molecule type" value="Genomic_DNA"/>
</dbReference>
<dbReference type="EMBL" id="CR541767">
    <property type="protein sequence ID" value="CAG46566.1"/>
    <property type="molecule type" value="mRNA"/>
</dbReference>
<dbReference type="EMBL" id="CR541774">
    <property type="protein sequence ID" value="CAG46573.1"/>
    <property type="molecule type" value="mRNA"/>
</dbReference>
<dbReference type="EMBL" id="AK292384">
    <property type="protein sequence ID" value="BAF85073.1"/>
    <property type="molecule type" value="mRNA"/>
</dbReference>
<dbReference type="EMBL" id="BC000340">
    <property type="protein sequence ID" value="AAH00340.1"/>
    <property type="molecule type" value="mRNA"/>
</dbReference>
<dbReference type="EMBL" id="BC005963">
    <property type="protein sequence ID" value="AAH05963.1"/>
    <property type="molecule type" value="mRNA"/>
</dbReference>
<dbReference type="EMBL" id="BC011744">
    <property type="protein sequence ID" value="AAH11744.1"/>
    <property type="molecule type" value="mRNA"/>
</dbReference>
<dbReference type="EMBL" id="BC016803">
    <property type="protein sequence ID" value="AAH16803.1"/>
    <property type="molecule type" value="mRNA"/>
</dbReference>
<dbReference type="EMBL" id="BC017389">
    <property type="protein sequence ID" value="AAH17389.1"/>
    <property type="molecule type" value="mRNA"/>
</dbReference>
<dbReference type="CCDS" id="CCDS76045.1"/>
<dbReference type="PIR" id="JC2361">
    <property type="entry name" value="JC2361"/>
</dbReference>
<dbReference type="RefSeq" id="NP_005353.1">
    <property type="nucleotide sequence ID" value="NM_005362.4"/>
</dbReference>
<dbReference type="RefSeq" id="XP_005274733.1">
    <property type="nucleotide sequence ID" value="XM_005274676.4"/>
</dbReference>
<dbReference type="RefSeq" id="XP_006724881.1">
    <property type="nucleotide sequence ID" value="XM_006724818.3"/>
</dbReference>
<dbReference type="RefSeq" id="XP_011529462.1">
    <property type="nucleotide sequence ID" value="XM_011531160.4"/>
</dbReference>
<dbReference type="RefSeq" id="XP_011529463.1">
    <property type="nucleotide sequence ID" value="XM_011531161.2"/>
</dbReference>
<dbReference type="RefSeq" id="XP_054189312.1">
    <property type="nucleotide sequence ID" value="XM_054333337.1"/>
</dbReference>
<dbReference type="RefSeq" id="XP_054189313.1">
    <property type="nucleotide sequence ID" value="XM_054333338.1"/>
</dbReference>
<dbReference type="RefSeq" id="XP_054189314.1">
    <property type="nucleotide sequence ID" value="XM_054333339.1"/>
</dbReference>
<dbReference type="RefSeq" id="XP_054189315.1">
    <property type="nucleotide sequence ID" value="XM_054333340.1"/>
</dbReference>
<dbReference type="PDB" id="1QEW">
    <property type="method" value="X-ray"/>
    <property type="resolution" value="2.20 A"/>
    <property type="chains" value="C=271-279"/>
</dbReference>
<dbReference type="PDB" id="4V0P">
    <property type="method" value="X-ray"/>
    <property type="resolution" value="2.07 A"/>
    <property type="chains" value="A=104-314"/>
</dbReference>
<dbReference type="PDB" id="5BRZ">
    <property type="method" value="X-ray"/>
    <property type="resolution" value="2.62 A"/>
    <property type="chains" value="C=168-176"/>
</dbReference>
<dbReference type="PDB" id="8T9A">
    <property type="method" value="EM"/>
    <property type="resolution" value="3.17 A"/>
    <property type="chains" value="C=104-314"/>
</dbReference>
<dbReference type="PDB" id="9BD2">
    <property type="method" value="X-ray"/>
    <property type="resolution" value="2.24 A"/>
    <property type="chains" value="A/B/C=104-310"/>
</dbReference>
<dbReference type="PDBsum" id="1QEW"/>
<dbReference type="PDBsum" id="4V0P"/>
<dbReference type="PDBsum" id="5BRZ"/>
<dbReference type="PDBsum" id="8T9A"/>
<dbReference type="PDBsum" id="9BD2"/>
<dbReference type="EMDB" id="EMD-41105"/>
<dbReference type="SMR" id="P43357"/>
<dbReference type="BioGRID" id="110276">
    <property type="interactions" value="139"/>
</dbReference>
<dbReference type="CORUM" id="P43357"/>
<dbReference type="DIP" id="DIP-44886N"/>
<dbReference type="FunCoup" id="P43357">
    <property type="interactions" value="24"/>
</dbReference>
<dbReference type="IntAct" id="P43357">
    <property type="interactions" value="44"/>
</dbReference>
<dbReference type="STRING" id="9606.ENSP00000473093"/>
<dbReference type="ChEMBL" id="CHEMBL4662941"/>
<dbReference type="iPTMnet" id="P43357"/>
<dbReference type="PhosphoSitePlus" id="P43357"/>
<dbReference type="BioMuta" id="MAGEA3"/>
<dbReference type="DMDM" id="1170857"/>
<dbReference type="jPOST" id="P43357"/>
<dbReference type="MassIVE" id="P43357"/>
<dbReference type="PaxDb" id="9606-ENSP00000473093"/>
<dbReference type="PeptideAtlas" id="P43357"/>
<dbReference type="ProteomicsDB" id="55619"/>
<dbReference type="Pumba" id="P43357"/>
<dbReference type="Antibodypedia" id="30766">
    <property type="antibodies" value="498 antibodies from 30 providers"/>
</dbReference>
<dbReference type="DNASU" id="4102"/>
<dbReference type="Ensembl" id="ENST00000370278.4">
    <property type="protein sequence ID" value="ENSP00000359301.3"/>
    <property type="gene ID" value="ENSG00000221867.9"/>
</dbReference>
<dbReference type="Ensembl" id="ENST00000598245.2">
    <property type="protein sequence ID" value="ENSP00000473093.1"/>
    <property type="gene ID" value="ENSG00000221867.9"/>
</dbReference>
<dbReference type="Ensembl" id="ENST00000709974.1">
    <property type="protein sequence ID" value="ENSP00000517961.1"/>
    <property type="gene ID" value="ENSG00000292186.1"/>
</dbReference>
<dbReference type="Ensembl" id="ENST00000709975.1">
    <property type="protein sequence ID" value="ENSP00000517962.1"/>
    <property type="gene ID" value="ENSG00000292186.1"/>
</dbReference>
<dbReference type="GeneID" id="4102"/>
<dbReference type="KEGG" id="hsa:4102"/>
<dbReference type="MANE-Select" id="ENST00000370278.4">
    <property type="protein sequence ID" value="ENSP00000359301.3"/>
    <property type="RefSeq nucleotide sequence ID" value="NM_005362.4"/>
    <property type="RefSeq protein sequence ID" value="NP_005353.1"/>
</dbReference>
<dbReference type="UCSC" id="uc033faf.1">
    <property type="organism name" value="human"/>
</dbReference>
<dbReference type="AGR" id="HGNC:6801"/>
<dbReference type="CTD" id="4102"/>
<dbReference type="DisGeNET" id="4102"/>
<dbReference type="GeneCards" id="MAGEA3"/>
<dbReference type="HGNC" id="HGNC:6801">
    <property type="gene designation" value="MAGEA3"/>
</dbReference>
<dbReference type="HPA" id="ENSG00000221867">
    <property type="expression patterns" value="Tissue enriched (testis)"/>
</dbReference>
<dbReference type="MIM" id="300174">
    <property type="type" value="gene"/>
</dbReference>
<dbReference type="neXtProt" id="NX_P43357"/>
<dbReference type="OpenTargets" id="ENSG00000221867"/>
<dbReference type="PharmGKB" id="PA30547"/>
<dbReference type="VEuPathDB" id="HostDB:ENSG00000221867"/>
<dbReference type="eggNOG" id="KOG4562">
    <property type="taxonomic scope" value="Eukaryota"/>
</dbReference>
<dbReference type="GeneTree" id="ENSGT00940000164672"/>
<dbReference type="HOGENOM" id="CLU_039582_1_2_1"/>
<dbReference type="InParanoid" id="P43357"/>
<dbReference type="OrthoDB" id="9536323at2759"/>
<dbReference type="PAN-GO" id="P43357">
    <property type="GO annotations" value="3 GO annotations based on evolutionary models"/>
</dbReference>
<dbReference type="PhylomeDB" id="P43357"/>
<dbReference type="TreeFam" id="TF328505"/>
<dbReference type="PathwayCommons" id="P43357"/>
<dbReference type="SignaLink" id="P43357"/>
<dbReference type="SIGNOR" id="P43357"/>
<dbReference type="BioGRID-ORCS" id="4102">
    <property type="hits" value="6 hits in 680 CRISPR screens"/>
</dbReference>
<dbReference type="ChiTaRS" id="MAGEA3">
    <property type="organism name" value="human"/>
</dbReference>
<dbReference type="EvolutionaryTrace" id="P43357"/>
<dbReference type="GeneWiki" id="MAGEA3"/>
<dbReference type="GenomeRNAi" id="4102"/>
<dbReference type="Pharos" id="P43357">
    <property type="development level" value="Tbio"/>
</dbReference>
<dbReference type="PRO" id="PR:P43357"/>
<dbReference type="Proteomes" id="UP000005640">
    <property type="component" value="Chromosome X"/>
</dbReference>
<dbReference type="RNAct" id="P43357">
    <property type="molecule type" value="protein"/>
</dbReference>
<dbReference type="Bgee" id="ENSG00000221867">
    <property type="expression patterns" value="Expressed in primordial germ cell in gonad and 33 other cell types or tissues"/>
</dbReference>
<dbReference type="ExpressionAtlas" id="P43357">
    <property type="expression patterns" value="baseline and differential"/>
</dbReference>
<dbReference type="GO" id="GO:0005783">
    <property type="term" value="C:endoplasmic reticulum"/>
    <property type="evidence" value="ECO:0000314"/>
    <property type="project" value="ParkinsonsUK-UCL"/>
</dbReference>
<dbReference type="GO" id="GO:0005634">
    <property type="term" value="C:nucleus"/>
    <property type="evidence" value="ECO:0000318"/>
    <property type="project" value="GO_Central"/>
</dbReference>
<dbReference type="GO" id="GO:0089720">
    <property type="term" value="F:caspase binding"/>
    <property type="evidence" value="ECO:0000314"/>
    <property type="project" value="ParkinsonsUK-UCL"/>
</dbReference>
<dbReference type="GO" id="GO:0042826">
    <property type="term" value="F:histone deacetylase binding"/>
    <property type="evidence" value="ECO:0000318"/>
    <property type="project" value="GO_Central"/>
</dbReference>
<dbReference type="GO" id="GO:0010507">
    <property type="term" value="P:negative regulation of autophagy"/>
    <property type="evidence" value="ECO:0000314"/>
    <property type="project" value="UniProtKB"/>
</dbReference>
<dbReference type="GO" id="GO:1902236">
    <property type="term" value="P:negative regulation of endoplasmic reticulum stress-induced intrinsic apoptotic signaling pathway"/>
    <property type="evidence" value="ECO:0000315"/>
    <property type="project" value="ParkinsonsUK-UCL"/>
</dbReference>
<dbReference type="GO" id="GO:0010955">
    <property type="term" value="P:negative regulation of protein processing"/>
    <property type="evidence" value="ECO:0000314"/>
    <property type="project" value="ParkinsonsUK-UCL"/>
</dbReference>
<dbReference type="GO" id="GO:0000122">
    <property type="term" value="P:negative regulation of transcription by RNA polymerase II"/>
    <property type="evidence" value="ECO:0000318"/>
    <property type="project" value="GO_Central"/>
</dbReference>
<dbReference type="FunFam" id="1.10.10.1200:FF:000002">
    <property type="entry name" value="MAGE family member A11"/>
    <property type="match status" value="1"/>
</dbReference>
<dbReference type="FunFam" id="1.10.10.1210:FF:000001">
    <property type="entry name" value="melanoma-associated antigen D1"/>
    <property type="match status" value="1"/>
</dbReference>
<dbReference type="Gene3D" id="1.10.10.1200">
    <property type="entry name" value="MAGE homology domain, winged helix WH1 motif"/>
    <property type="match status" value="1"/>
</dbReference>
<dbReference type="Gene3D" id="1.10.10.1210">
    <property type="entry name" value="MAGE homology domain, winged helix WH2 motif"/>
    <property type="match status" value="1"/>
</dbReference>
<dbReference type="InterPro" id="IPR037445">
    <property type="entry name" value="MAGE"/>
</dbReference>
<dbReference type="InterPro" id="IPR021072">
    <property type="entry name" value="MAGE_N"/>
</dbReference>
<dbReference type="InterPro" id="IPR041898">
    <property type="entry name" value="MAGE_WH1"/>
</dbReference>
<dbReference type="InterPro" id="IPR041899">
    <property type="entry name" value="MAGE_WH2"/>
</dbReference>
<dbReference type="InterPro" id="IPR002190">
    <property type="entry name" value="MHD_dom"/>
</dbReference>
<dbReference type="PANTHER" id="PTHR11736:SF60">
    <property type="entry name" value="MELANOMA-ASSOCIATED ANTIGEN 3-RELATED"/>
    <property type="match status" value="1"/>
</dbReference>
<dbReference type="PANTHER" id="PTHR11736">
    <property type="entry name" value="MELANOMA-ASSOCIATED ANTIGEN MAGE ANTIGEN"/>
    <property type="match status" value="1"/>
</dbReference>
<dbReference type="Pfam" id="PF01454">
    <property type="entry name" value="MAGE"/>
    <property type="match status" value="1"/>
</dbReference>
<dbReference type="Pfam" id="PF12440">
    <property type="entry name" value="MAGE_N"/>
    <property type="match status" value="1"/>
</dbReference>
<dbReference type="SMART" id="SM01373">
    <property type="entry name" value="MAGE"/>
    <property type="match status" value="1"/>
</dbReference>
<dbReference type="SMART" id="SM01392">
    <property type="entry name" value="MAGE_N"/>
    <property type="match status" value="1"/>
</dbReference>
<dbReference type="PROSITE" id="PS50838">
    <property type="entry name" value="MAGE"/>
    <property type="match status" value="1"/>
</dbReference>
<name>MAGA3_HUMAN</name>
<comment type="function">
    <text evidence="3 4 6 7">Activator of ubiquitin ligase activity of RING-type zinc finger-containing E3 ubiquitin-protein ligases that acts as a repressor of autophagy (PubMed:20864041, PubMed:31267705). May enhance ubiquitin ligase activity of TRIM28 and stimulate p53/TP53 ubiquitination by TRIM28. Proposed to act through recruitment and/or stabilization of the Ubl-conjugating enzyme (E2) at the E3:substrate complex (PubMed:17942928, PubMed:20864041). May play a role in embryonal development and tumor transformation or aspects of tumor progression (PubMed:17942928, PubMed:20864041). In vitro promotes cell viability in melanoma cell lines (PubMed:17942928). Antigen recognized on a melanoma by autologous cytolytic T-lymphocytes (PubMed:8113684).</text>
</comment>
<comment type="subunit">
    <text evidence="3 4 8">Interacts with TRIM28.</text>
</comment>
<comment type="interaction">
    <interactant intactId="EBI-5651459">
        <id>P43357</id>
    </interactant>
    <interactant intactId="EBI-12007918">
        <id>O00154-4</id>
        <label>ACOT7</label>
    </interactant>
    <organismsDiffer>false</organismsDiffer>
    <experiments>3</experiments>
</comment>
<comment type="interaction">
    <interactant intactId="EBI-5651459">
        <id>P43357</id>
    </interactant>
    <interactant intactId="EBI-4280811">
        <id>Q8IXM2</id>
        <label>BAP18</label>
    </interactant>
    <organismsDiffer>false</organismsDiffer>
    <experiments>5</experiments>
</comment>
<comment type="interaction">
    <interactant intactId="EBI-5651459">
        <id>P43357</id>
    </interactant>
    <interactant intactId="EBI-2560588">
        <id>Q9BQE9</id>
        <label>BCL7B</label>
    </interactant>
    <organismsDiffer>false</organismsDiffer>
    <experiments>3</experiments>
</comment>
<comment type="interaction">
    <interactant intactId="EBI-5651459">
        <id>P43357</id>
    </interactant>
    <interactant intactId="EBI-739784">
        <id>Q9BW66</id>
        <label>CINP</label>
    </interactant>
    <organismsDiffer>false</organismsDiffer>
    <experiments>3</experiments>
</comment>
<comment type="interaction">
    <interactant intactId="EBI-5651459">
        <id>P43357</id>
    </interactant>
    <interactant intactId="EBI-949824">
        <id>O00471</id>
        <label>EXOC5</label>
    </interactant>
    <organismsDiffer>false</organismsDiffer>
    <experiments>3</experiments>
</comment>
<comment type="interaction">
    <interactant intactId="EBI-5651459">
        <id>P43357</id>
    </interactant>
    <interactant intactId="EBI-466029">
        <id>P42858</id>
        <label>HTT</label>
    </interactant>
    <organismsDiffer>false</organismsDiffer>
    <experiments>6</experiments>
</comment>
<comment type="interaction">
    <interactant intactId="EBI-5651459">
        <id>P43357</id>
    </interactant>
    <interactant intactId="EBI-12064916">
        <id>A0A0C4DGT3</id>
        <label>IQSEC1</label>
    </interactant>
    <organismsDiffer>false</organismsDiffer>
    <experiments>3</experiments>
</comment>
<comment type="interaction">
    <interactant intactId="EBI-5651459">
        <id>P43357</id>
    </interactant>
    <interactant intactId="EBI-7950718">
        <id>Q86VH2</id>
        <label>KIF27</label>
    </interactant>
    <organismsDiffer>false</organismsDiffer>
    <experiments>3</experiments>
</comment>
<comment type="interaction">
    <interactant intactId="EBI-5651459">
        <id>P43357</id>
    </interactant>
    <interactant intactId="EBI-347416">
        <id>Q9Y333</id>
        <label>LSM2</label>
    </interactant>
    <organismsDiffer>false</organismsDiffer>
    <experiments>3</experiments>
</comment>
<comment type="interaction">
    <interactant intactId="EBI-5651459">
        <id>P43357</id>
    </interactant>
    <interactant intactId="EBI-2563309">
        <id>P49585</id>
        <label>PCYT1A</label>
    </interactant>
    <organismsDiffer>false</organismsDiffer>
    <experiments>3</experiments>
</comment>
<comment type="interaction">
    <interactant intactId="EBI-5651459">
        <id>P43357</id>
    </interactant>
    <interactant intactId="EBI-6257312">
        <id>Q9BVN2</id>
        <label>RUSC1</label>
    </interactant>
    <organismsDiffer>false</organismsDiffer>
    <experiments>3</experiments>
</comment>
<comment type="interaction">
    <interactant intactId="EBI-5651459">
        <id>P43357</id>
    </interactant>
    <interactant intactId="EBI-1055001">
        <id>P06702</id>
        <label>S100A9</label>
    </interactant>
    <organismsDiffer>false</organismsDiffer>
    <experiments>3</experiments>
</comment>
<comment type="interaction">
    <interactant intactId="EBI-5651459">
        <id>P43357</id>
    </interactant>
    <interactant intactId="EBI-745021">
        <id>Q96FJ0</id>
        <label>STAMBPL1</label>
    </interactant>
    <organismsDiffer>false</organismsDiffer>
    <experiments>6</experiments>
</comment>
<comment type="interaction">
    <interactant intactId="EBI-5651459">
        <id>P43357</id>
    </interactant>
    <interactant intactId="EBI-78139">
        <id>Q13263</id>
        <label>TRIM28</label>
    </interactant>
    <organismsDiffer>false</organismsDiffer>
    <experiments>3</experiments>
</comment>
<comment type="tissue specificity">
    <text evidence="7">Expressed in many tumors of several types, such as melanoma, head and neck squamous cell carcinoma, lung carcinoma and breast carcinoma, but not in normal tissues except for testes and placenta. Never expressed in kidney tumors, Leukemias and lymphomas.</text>
</comment>
<comment type="PTM">
    <text evidence="5 6">Ubiquitinated by the DCX(DCAF12) complex specifically recognizes the diglutamate (Glu-Glu) at the C-terminus, leading to its degradation.</text>
</comment>
<comment type="caution">
    <text evidence="3">In vitro experiments measuring cell viability in melanoma cell lines used siRNA specific for MAGEA3 and MAGEA6.</text>
</comment>
<keyword id="KW-0002">3D-structure</keyword>
<keyword id="KW-1267">Proteomics identification</keyword>
<keyword id="KW-1185">Reference proteome</keyword>
<keyword id="KW-0825">Tumor antigen</keyword>
<keyword id="KW-0832">Ubl conjugation</keyword>
<keyword id="KW-0833">Ubl conjugation pathway</keyword>
<gene>
    <name evidence="9 12" type="primary">MAGEA3</name>
    <name evidence="10" type="synonym">MAGE3</name>
</gene>
<organism>
    <name type="scientific">Homo sapiens</name>
    <name type="common">Human</name>
    <dbReference type="NCBI Taxonomy" id="9606"/>
    <lineage>
        <taxon>Eukaryota</taxon>
        <taxon>Metazoa</taxon>
        <taxon>Chordata</taxon>
        <taxon>Craniata</taxon>
        <taxon>Vertebrata</taxon>
        <taxon>Euteleostomi</taxon>
        <taxon>Mammalia</taxon>
        <taxon>Eutheria</taxon>
        <taxon>Euarchontoglires</taxon>
        <taxon>Primates</taxon>
        <taxon>Haplorrhini</taxon>
        <taxon>Catarrhini</taxon>
        <taxon>Hominidae</taxon>
        <taxon>Homo</taxon>
    </lineage>
</organism>
<sequence length="314" mass="34747">MPLEQRSQHCKPEEGLEARGEALGLVGAQAPATEEQEAASSSSTLVEVTLGEVPAAESPDPPQSPQGASSLPTTMNYPLWSQSYEDSSNQEEEGPSTFPDLESEFQAALSRKVAELVHFLLLKYRAREPVTKAEMLGSVVGNWQYFFPVIFSKASSSLQLVFGIELMEVDPIGHLYIFATCLGLSYDGLLGDNQIMPKAGLLIIVLAIIAREGDCAPEEKIWEELSVLEVFEGREDSILGDPKKLLTQHFVQENYLEYRQVPGSDPACYEFLWGPRALVETSYVKVLHHMVKISGGPHISYPPLHEWVLREGEE</sequence>
<proteinExistence type="evidence at protein level"/>
<protein>
    <recommendedName>
        <fullName evidence="11">Melanoma-associated antigen 3</fullName>
    </recommendedName>
    <alternativeName>
        <fullName>Antigen MZ2-D</fullName>
    </alternativeName>
    <alternativeName>
        <fullName>Cancer/testis antigen 1.3</fullName>
        <shortName>CT1.3</shortName>
    </alternativeName>
    <alternativeName>
        <fullName evidence="10">MAGE-3 antigen</fullName>
    </alternativeName>
</protein>
<accession>P43357</accession>
<accession>Q6FHI6</accession>